<name>APOC4_PHYMC</name>
<dbReference type="EMBL" id="AWZP01003785">
    <property type="status" value="NOT_ANNOTATED_CDS"/>
    <property type="molecule type" value="Genomic_DNA"/>
</dbReference>
<dbReference type="RefSeq" id="XP_007101348.1">
    <property type="nucleotide sequence ID" value="XM_007101286.1"/>
</dbReference>
<dbReference type="FunCoup" id="P0DML5">
    <property type="interactions" value="29"/>
</dbReference>
<dbReference type="InParanoid" id="P0DML5"/>
<dbReference type="Proteomes" id="UP000248484">
    <property type="component" value="Unplaced"/>
</dbReference>
<dbReference type="GO" id="GO:0034364">
    <property type="term" value="C:high-density lipoprotein particle"/>
    <property type="evidence" value="ECO:0007669"/>
    <property type="project" value="TreeGrafter"/>
</dbReference>
<dbReference type="GO" id="GO:0034361">
    <property type="term" value="C:very-low-density lipoprotein particle"/>
    <property type="evidence" value="ECO:0007669"/>
    <property type="project" value="TreeGrafter"/>
</dbReference>
<dbReference type="GO" id="GO:0006869">
    <property type="term" value="P:lipid transport"/>
    <property type="evidence" value="ECO:0007669"/>
    <property type="project" value="UniProtKB-KW"/>
</dbReference>
<dbReference type="GO" id="GO:0010890">
    <property type="term" value="P:positive regulation of triglyceride storage"/>
    <property type="evidence" value="ECO:0007669"/>
    <property type="project" value="TreeGrafter"/>
</dbReference>
<dbReference type="GO" id="GO:0070328">
    <property type="term" value="P:triglyceride homeostasis"/>
    <property type="evidence" value="ECO:0007669"/>
    <property type="project" value="TreeGrafter"/>
</dbReference>
<dbReference type="InterPro" id="IPR028120">
    <property type="entry name" value="APOC4"/>
</dbReference>
<dbReference type="PANTHER" id="PTHR32288">
    <property type="entry name" value="APOLIPOPROTEIN C-IV"/>
    <property type="match status" value="1"/>
</dbReference>
<dbReference type="PANTHER" id="PTHR32288:SF0">
    <property type="entry name" value="APOLIPOPROTEIN C-IV"/>
    <property type="match status" value="1"/>
</dbReference>
<dbReference type="Pfam" id="PF15119">
    <property type="entry name" value="APOC4"/>
    <property type="match status" value="1"/>
</dbReference>
<organism>
    <name type="scientific">Physeter macrocephalus</name>
    <name type="common">Sperm whale</name>
    <name type="synonym">Physeter catodon</name>
    <dbReference type="NCBI Taxonomy" id="9755"/>
    <lineage>
        <taxon>Eukaryota</taxon>
        <taxon>Metazoa</taxon>
        <taxon>Chordata</taxon>
        <taxon>Craniata</taxon>
        <taxon>Vertebrata</taxon>
        <taxon>Euteleostomi</taxon>
        <taxon>Mammalia</taxon>
        <taxon>Eutheria</taxon>
        <taxon>Laurasiatheria</taxon>
        <taxon>Artiodactyla</taxon>
        <taxon>Whippomorpha</taxon>
        <taxon>Cetacea</taxon>
        <taxon>Odontoceti</taxon>
        <taxon>Physeteridae</taxon>
        <taxon>Physeter</taxon>
    </lineage>
</organism>
<feature type="signal peptide" evidence="2">
    <location>
        <begin position="1"/>
        <end position="27"/>
    </location>
</feature>
<feature type="chain" id="PRO_0000429973" description="Apolipoprotein C-IV">
    <location>
        <begin position="28"/>
        <end position="127"/>
    </location>
</feature>
<sequence>MLFPGCRSRALSSLCFCVLVLACVVACQQEGPGGTSSPPPEPASSSWSLVPGKVKEWMEPLVTRTRESWQWFWGPRAFQGFLQTYYDDHLRDLRSHTQAWLQSSKDSLLNKAYNLCPQLLCGDSSWD</sequence>
<comment type="function">
    <text evidence="1">May participate in lipoprotein metabolism.</text>
</comment>
<comment type="subcellular location">
    <subcellularLocation>
        <location evidence="1">Secreted</location>
    </subcellularLocation>
</comment>
<comment type="similarity">
    <text evidence="3">Belongs to the apolipoprotein C4 family.</text>
</comment>
<accession>P0DML5</accession>
<evidence type="ECO:0000250" key="1"/>
<evidence type="ECO:0000250" key="2">
    <source>
        <dbReference type="UniProtKB" id="P55057"/>
    </source>
</evidence>
<evidence type="ECO:0000305" key="3"/>
<keyword id="KW-0445">Lipid transport</keyword>
<keyword id="KW-1185">Reference proteome</keyword>
<keyword id="KW-0964">Secreted</keyword>
<keyword id="KW-0732">Signal</keyword>
<keyword id="KW-0813">Transport</keyword>
<protein>
    <recommendedName>
        <fullName>Apolipoprotein C-IV</fullName>
        <shortName>Apo-CIV</shortName>
        <shortName>ApoC-IV</shortName>
    </recommendedName>
    <alternativeName>
        <fullName>Apolipoprotein C4</fullName>
    </alternativeName>
</protein>
<reference key="1">
    <citation type="submission" date="2013-09" db="EMBL/GenBank/DDBJ databases">
        <authorList>
            <person name="Walter R."/>
            <person name="Wise J."/>
            <person name="Warren W."/>
            <person name="Wilson R.K."/>
        </authorList>
    </citation>
    <scope>NUCLEOTIDE SEQUENCE [LARGE SCALE GENOMIC DNA]</scope>
</reference>
<reference key="2">
    <citation type="unpublished observations" date="2014-06">
        <authorList>
            <person name="Puppione D.L."/>
        </authorList>
    </citation>
    <scope>IDENTIFICATION</scope>
</reference>
<proteinExistence type="inferred from homology"/>
<gene>
    <name type="primary">APOC4</name>
</gene>